<dbReference type="EC" id="4.2.1.33" evidence="1"/>
<dbReference type="EMBL" id="CP000946">
    <property type="protein sequence ID" value="ACA79199.1"/>
    <property type="molecule type" value="Genomic_DNA"/>
</dbReference>
<dbReference type="RefSeq" id="WP_001140641.1">
    <property type="nucleotide sequence ID" value="NZ_MTFT01000035.1"/>
</dbReference>
<dbReference type="SMR" id="B1IRA6"/>
<dbReference type="KEGG" id="ecl:EcolC_3585"/>
<dbReference type="HOGENOM" id="CLU_006714_3_4_6"/>
<dbReference type="UniPathway" id="UPA00048">
    <property type="reaction ID" value="UER00071"/>
</dbReference>
<dbReference type="GO" id="GO:0003861">
    <property type="term" value="F:3-isopropylmalate dehydratase activity"/>
    <property type="evidence" value="ECO:0007669"/>
    <property type="project" value="UniProtKB-UniRule"/>
</dbReference>
<dbReference type="GO" id="GO:0051539">
    <property type="term" value="F:4 iron, 4 sulfur cluster binding"/>
    <property type="evidence" value="ECO:0007669"/>
    <property type="project" value="UniProtKB-KW"/>
</dbReference>
<dbReference type="GO" id="GO:0046872">
    <property type="term" value="F:metal ion binding"/>
    <property type="evidence" value="ECO:0007669"/>
    <property type="project" value="UniProtKB-KW"/>
</dbReference>
<dbReference type="GO" id="GO:0009098">
    <property type="term" value="P:L-leucine biosynthetic process"/>
    <property type="evidence" value="ECO:0007669"/>
    <property type="project" value="UniProtKB-UniRule"/>
</dbReference>
<dbReference type="CDD" id="cd01583">
    <property type="entry name" value="IPMI"/>
    <property type="match status" value="1"/>
</dbReference>
<dbReference type="FunFam" id="3.30.499.10:FF:000006">
    <property type="entry name" value="3-isopropylmalate dehydratase large subunit"/>
    <property type="match status" value="1"/>
</dbReference>
<dbReference type="FunFam" id="3.30.499.10:FF:000007">
    <property type="entry name" value="3-isopropylmalate dehydratase large subunit"/>
    <property type="match status" value="1"/>
</dbReference>
<dbReference type="Gene3D" id="3.30.499.10">
    <property type="entry name" value="Aconitase, domain 3"/>
    <property type="match status" value="2"/>
</dbReference>
<dbReference type="HAMAP" id="MF_01026">
    <property type="entry name" value="LeuC_type1"/>
    <property type="match status" value="1"/>
</dbReference>
<dbReference type="InterPro" id="IPR004430">
    <property type="entry name" value="3-IsopropMal_deHydase_lsu"/>
</dbReference>
<dbReference type="InterPro" id="IPR015931">
    <property type="entry name" value="Acnase/IPM_dHydase_lsu_aba_1/3"/>
</dbReference>
<dbReference type="InterPro" id="IPR001030">
    <property type="entry name" value="Acoase/IPM_deHydtase_lsu_aba"/>
</dbReference>
<dbReference type="InterPro" id="IPR018136">
    <property type="entry name" value="Aconitase_4Fe-4S_BS"/>
</dbReference>
<dbReference type="InterPro" id="IPR036008">
    <property type="entry name" value="Aconitase_4Fe-4S_dom"/>
</dbReference>
<dbReference type="InterPro" id="IPR050067">
    <property type="entry name" value="IPM_dehydratase_rel_enz"/>
</dbReference>
<dbReference type="InterPro" id="IPR033941">
    <property type="entry name" value="IPMI_cat"/>
</dbReference>
<dbReference type="NCBIfam" id="TIGR00170">
    <property type="entry name" value="leuC"/>
    <property type="match status" value="1"/>
</dbReference>
<dbReference type="NCBIfam" id="NF004016">
    <property type="entry name" value="PRK05478.1"/>
    <property type="match status" value="1"/>
</dbReference>
<dbReference type="NCBIfam" id="NF009116">
    <property type="entry name" value="PRK12466.1"/>
    <property type="match status" value="1"/>
</dbReference>
<dbReference type="PANTHER" id="PTHR43822:SF9">
    <property type="entry name" value="3-ISOPROPYLMALATE DEHYDRATASE"/>
    <property type="match status" value="1"/>
</dbReference>
<dbReference type="PANTHER" id="PTHR43822">
    <property type="entry name" value="HOMOACONITASE, MITOCHONDRIAL-RELATED"/>
    <property type="match status" value="1"/>
</dbReference>
<dbReference type="Pfam" id="PF00330">
    <property type="entry name" value="Aconitase"/>
    <property type="match status" value="1"/>
</dbReference>
<dbReference type="PRINTS" id="PR00415">
    <property type="entry name" value="ACONITASE"/>
</dbReference>
<dbReference type="SUPFAM" id="SSF53732">
    <property type="entry name" value="Aconitase iron-sulfur domain"/>
    <property type="match status" value="1"/>
</dbReference>
<dbReference type="PROSITE" id="PS00450">
    <property type="entry name" value="ACONITASE_1"/>
    <property type="match status" value="1"/>
</dbReference>
<dbReference type="PROSITE" id="PS01244">
    <property type="entry name" value="ACONITASE_2"/>
    <property type="match status" value="1"/>
</dbReference>
<protein>
    <recommendedName>
        <fullName evidence="1">3-isopropylmalate dehydratase large subunit</fullName>
        <ecNumber evidence="1">4.2.1.33</ecNumber>
    </recommendedName>
    <alternativeName>
        <fullName evidence="1">Alpha-IPM isomerase</fullName>
        <shortName evidence="1">IPMI</shortName>
    </alternativeName>
    <alternativeName>
        <fullName evidence="1">Isopropylmalate isomerase</fullName>
    </alternativeName>
</protein>
<comment type="function">
    <text evidence="1">Catalyzes the isomerization between 2-isopropylmalate and 3-isopropylmalate, via the formation of 2-isopropylmaleate.</text>
</comment>
<comment type="catalytic activity">
    <reaction evidence="1">
        <text>(2R,3S)-3-isopropylmalate = (2S)-2-isopropylmalate</text>
        <dbReference type="Rhea" id="RHEA:32287"/>
        <dbReference type="ChEBI" id="CHEBI:1178"/>
        <dbReference type="ChEBI" id="CHEBI:35121"/>
        <dbReference type="EC" id="4.2.1.33"/>
    </reaction>
</comment>
<comment type="cofactor">
    <cofactor evidence="1">
        <name>[4Fe-4S] cluster</name>
        <dbReference type="ChEBI" id="CHEBI:49883"/>
    </cofactor>
    <text evidence="1">Binds 1 [4Fe-4S] cluster per subunit.</text>
</comment>
<comment type="pathway">
    <text evidence="1">Amino-acid biosynthesis; L-leucine biosynthesis; L-leucine from 3-methyl-2-oxobutanoate: step 2/4.</text>
</comment>
<comment type="subunit">
    <text evidence="1">Heterodimer of LeuC and LeuD.</text>
</comment>
<comment type="similarity">
    <text evidence="1">Belongs to the aconitase/IPM isomerase family. LeuC type 1 subfamily.</text>
</comment>
<organism>
    <name type="scientific">Escherichia coli (strain ATCC 8739 / DSM 1576 / NBRC 3972 / NCIMB 8545 / WDCM 00012 / Crooks)</name>
    <dbReference type="NCBI Taxonomy" id="481805"/>
    <lineage>
        <taxon>Bacteria</taxon>
        <taxon>Pseudomonadati</taxon>
        <taxon>Pseudomonadota</taxon>
        <taxon>Gammaproteobacteria</taxon>
        <taxon>Enterobacterales</taxon>
        <taxon>Enterobacteriaceae</taxon>
        <taxon>Escherichia</taxon>
    </lineage>
</organism>
<accession>B1IRA6</accession>
<sequence length="466" mass="49896">MAKTLYEKLFDAHVVYEAENETPLLYIDRHLVHEVTSPQAFDGLRAHGRPVRQPGKTFATMDHNVSTQTKDINACGEMARIQMQELIKNCKEFGVELYDLNHPYQGIVHVMGPEQGVTLPGMTIVCGDSHTATHGAFGALAFGIGTSEVEHVLATQTLKQGRAKTMKIEVQGKAAPGITAKDIVLAIIGKTGSAGGTGHVVEFCGEAIRDLSMEGRMTLCNMAIEMGAKAGLVAPDETTFNYVKGRLHAPKGKDFDDAIAYWKTLQTDEGATFDTVVTLQAEEISPQVTWGTNPGQVISVNDNIPDPASFADPVERASAEKALAYMGLKPGIPLTEVAIDKVFIGSCTNSRIEDLRAAAEIAKGRKVAPGVQALVVPGSGPVKAQAEAEGLDKIFIEAGFEWRLPGCSMCLAMNNDRLNPGERCASTSNRNFEGRQGRGGRTHLVSPAMAAAAAVTGHFADIRNIK</sequence>
<evidence type="ECO:0000255" key="1">
    <source>
        <dbReference type="HAMAP-Rule" id="MF_01026"/>
    </source>
</evidence>
<gene>
    <name evidence="1" type="primary">leuC</name>
    <name type="ordered locus">EcolC_3585</name>
</gene>
<keyword id="KW-0004">4Fe-4S</keyword>
<keyword id="KW-0028">Amino-acid biosynthesis</keyword>
<keyword id="KW-0100">Branched-chain amino acid biosynthesis</keyword>
<keyword id="KW-0408">Iron</keyword>
<keyword id="KW-0411">Iron-sulfur</keyword>
<keyword id="KW-0432">Leucine biosynthesis</keyword>
<keyword id="KW-0456">Lyase</keyword>
<keyword id="KW-0479">Metal-binding</keyword>
<feature type="chain" id="PRO_1000084212" description="3-isopropylmalate dehydratase large subunit">
    <location>
        <begin position="1"/>
        <end position="466"/>
    </location>
</feature>
<feature type="binding site" evidence="1">
    <location>
        <position position="347"/>
    </location>
    <ligand>
        <name>[4Fe-4S] cluster</name>
        <dbReference type="ChEBI" id="CHEBI:49883"/>
    </ligand>
</feature>
<feature type="binding site" evidence="1">
    <location>
        <position position="407"/>
    </location>
    <ligand>
        <name>[4Fe-4S] cluster</name>
        <dbReference type="ChEBI" id="CHEBI:49883"/>
    </ligand>
</feature>
<feature type="binding site" evidence="1">
    <location>
        <position position="410"/>
    </location>
    <ligand>
        <name>[4Fe-4S] cluster</name>
        <dbReference type="ChEBI" id="CHEBI:49883"/>
    </ligand>
</feature>
<proteinExistence type="inferred from homology"/>
<name>LEUC_ECOLC</name>
<reference key="1">
    <citation type="submission" date="2008-02" db="EMBL/GenBank/DDBJ databases">
        <title>Complete sequence of Escherichia coli C str. ATCC 8739.</title>
        <authorList>
            <person name="Copeland A."/>
            <person name="Lucas S."/>
            <person name="Lapidus A."/>
            <person name="Glavina del Rio T."/>
            <person name="Dalin E."/>
            <person name="Tice H."/>
            <person name="Bruce D."/>
            <person name="Goodwin L."/>
            <person name="Pitluck S."/>
            <person name="Kiss H."/>
            <person name="Brettin T."/>
            <person name="Detter J.C."/>
            <person name="Han C."/>
            <person name="Kuske C.R."/>
            <person name="Schmutz J."/>
            <person name="Larimer F."/>
            <person name="Land M."/>
            <person name="Hauser L."/>
            <person name="Kyrpides N."/>
            <person name="Mikhailova N."/>
            <person name="Ingram L."/>
            <person name="Richardson P."/>
        </authorList>
    </citation>
    <scope>NUCLEOTIDE SEQUENCE [LARGE SCALE GENOMIC DNA]</scope>
    <source>
        <strain>ATCC 8739 / DSM 1576 / NBRC 3972 / NCIMB 8545 / WDCM 00012 / Crooks</strain>
    </source>
</reference>